<feature type="chain" id="PRO_1000072633" description="Chaperonin GroEL">
    <location>
        <begin position="1"/>
        <end position="548"/>
    </location>
</feature>
<feature type="binding site" evidence="1">
    <location>
        <begin position="29"/>
        <end position="32"/>
    </location>
    <ligand>
        <name>ATP</name>
        <dbReference type="ChEBI" id="CHEBI:30616"/>
    </ligand>
</feature>
<feature type="binding site" evidence="1">
    <location>
        <position position="50"/>
    </location>
    <ligand>
        <name>ATP</name>
        <dbReference type="ChEBI" id="CHEBI:30616"/>
    </ligand>
</feature>
<feature type="binding site" evidence="1">
    <location>
        <begin position="86"/>
        <end position="90"/>
    </location>
    <ligand>
        <name>ATP</name>
        <dbReference type="ChEBI" id="CHEBI:30616"/>
    </ligand>
</feature>
<feature type="binding site" evidence="1">
    <location>
        <position position="414"/>
    </location>
    <ligand>
        <name>ATP</name>
        <dbReference type="ChEBI" id="CHEBI:30616"/>
    </ligand>
</feature>
<feature type="binding site" evidence="1">
    <location>
        <begin position="478"/>
        <end position="480"/>
    </location>
    <ligand>
        <name>ATP</name>
        <dbReference type="ChEBI" id="CHEBI:30616"/>
    </ligand>
</feature>
<feature type="binding site" evidence="1">
    <location>
        <position position="494"/>
    </location>
    <ligand>
        <name>ATP</name>
        <dbReference type="ChEBI" id="CHEBI:30616"/>
    </ligand>
</feature>
<sequence>MAKDVKFGIDARKQMMDGVNVLANAVKVTLGPKGRNVVIDKSFGAPAITKDGVSVAKEIELENKFENMGAQLVREVASKTNDVAGDGTTTATVLAQAILVEGMKSVAAGMNPMDLKRGIDKAVAAAVEEIHNISTPADDSKAIAQVGSISANSDTKIGELIAEAMDKVGKKGVITVEEGSGFEDSLEVVEGMQFDRGYISPYFANKQDSLTAEFENPYILLVDKKISNIREIVPLLEQVMQQSKPLLIIAEDVENEALATLVVNNMRGGLKTCAVKAPGFGDRRKAMLQDIAILTGGTVISEEVGMSLETATIEQLGTAKKVTVGKENTVIVDGAGNKADIEARVESINRQIEESTSDYDKEKLQERVAKLSGGVAVIKVGAATETAMKEKKDRVDDALHATRAAVEEGVVPGGGVALVRALNALADLKGDNEDQNAGINILRRAMEAPLRQIVTNAGDEASVVVNEVKNGSGNYGYNAATGVYGDMLEMGILDPAKVSRSALEHAASVAGLMLTTEAMITDKPQSDDPMAGMGGAGMGGMGGMGGMM</sequence>
<accession>A5WD52</accession>
<keyword id="KW-0067">ATP-binding</keyword>
<keyword id="KW-0143">Chaperone</keyword>
<keyword id="KW-0963">Cytoplasm</keyword>
<keyword id="KW-0413">Isomerase</keyword>
<keyword id="KW-0547">Nucleotide-binding</keyword>
<dbReference type="EC" id="5.6.1.7" evidence="1"/>
<dbReference type="EMBL" id="CP000713">
    <property type="protein sequence ID" value="ABQ93593.1"/>
    <property type="molecule type" value="Genomic_DNA"/>
</dbReference>
<dbReference type="SMR" id="A5WD52"/>
<dbReference type="STRING" id="349106.PsycPRwf_0638"/>
<dbReference type="KEGG" id="prw:PsycPRwf_0638"/>
<dbReference type="eggNOG" id="COG0459">
    <property type="taxonomic scope" value="Bacteria"/>
</dbReference>
<dbReference type="HOGENOM" id="CLU_016503_3_0_6"/>
<dbReference type="GO" id="GO:0005737">
    <property type="term" value="C:cytoplasm"/>
    <property type="evidence" value="ECO:0007669"/>
    <property type="project" value="UniProtKB-SubCell"/>
</dbReference>
<dbReference type="GO" id="GO:0005524">
    <property type="term" value="F:ATP binding"/>
    <property type="evidence" value="ECO:0007669"/>
    <property type="project" value="UniProtKB-UniRule"/>
</dbReference>
<dbReference type="GO" id="GO:0140662">
    <property type="term" value="F:ATP-dependent protein folding chaperone"/>
    <property type="evidence" value="ECO:0007669"/>
    <property type="project" value="InterPro"/>
</dbReference>
<dbReference type="GO" id="GO:0016853">
    <property type="term" value="F:isomerase activity"/>
    <property type="evidence" value="ECO:0007669"/>
    <property type="project" value="UniProtKB-KW"/>
</dbReference>
<dbReference type="GO" id="GO:0051082">
    <property type="term" value="F:unfolded protein binding"/>
    <property type="evidence" value="ECO:0007669"/>
    <property type="project" value="UniProtKB-UniRule"/>
</dbReference>
<dbReference type="GO" id="GO:0042026">
    <property type="term" value="P:protein refolding"/>
    <property type="evidence" value="ECO:0007669"/>
    <property type="project" value="UniProtKB-UniRule"/>
</dbReference>
<dbReference type="CDD" id="cd03344">
    <property type="entry name" value="GroEL"/>
    <property type="match status" value="1"/>
</dbReference>
<dbReference type="FunFam" id="1.10.560.10:FF:000001">
    <property type="entry name" value="60 kDa chaperonin"/>
    <property type="match status" value="1"/>
</dbReference>
<dbReference type="FunFam" id="3.50.7.10:FF:000001">
    <property type="entry name" value="60 kDa chaperonin"/>
    <property type="match status" value="1"/>
</dbReference>
<dbReference type="Gene3D" id="3.50.7.10">
    <property type="entry name" value="GroEL"/>
    <property type="match status" value="1"/>
</dbReference>
<dbReference type="Gene3D" id="1.10.560.10">
    <property type="entry name" value="GroEL-like equatorial domain"/>
    <property type="match status" value="1"/>
</dbReference>
<dbReference type="Gene3D" id="3.30.260.10">
    <property type="entry name" value="TCP-1-like chaperonin intermediate domain"/>
    <property type="match status" value="1"/>
</dbReference>
<dbReference type="HAMAP" id="MF_00600">
    <property type="entry name" value="CH60"/>
    <property type="match status" value="1"/>
</dbReference>
<dbReference type="InterPro" id="IPR018370">
    <property type="entry name" value="Chaperonin_Cpn60_CS"/>
</dbReference>
<dbReference type="InterPro" id="IPR001844">
    <property type="entry name" value="Cpn60/GroEL"/>
</dbReference>
<dbReference type="InterPro" id="IPR002423">
    <property type="entry name" value="Cpn60/GroEL/TCP-1"/>
</dbReference>
<dbReference type="InterPro" id="IPR027409">
    <property type="entry name" value="GroEL-like_apical_dom_sf"/>
</dbReference>
<dbReference type="InterPro" id="IPR027413">
    <property type="entry name" value="GROEL-like_equatorial_sf"/>
</dbReference>
<dbReference type="InterPro" id="IPR027410">
    <property type="entry name" value="TCP-1-like_intermed_sf"/>
</dbReference>
<dbReference type="NCBIfam" id="TIGR02348">
    <property type="entry name" value="GroEL"/>
    <property type="match status" value="1"/>
</dbReference>
<dbReference type="NCBIfam" id="NF000592">
    <property type="entry name" value="PRK00013.1"/>
    <property type="match status" value="1"/>
</dbReference>
<dbReference type="NCBIfam" id="NF009487">
    <property type="entry name" value="PRK12849.1"/>
    <property type="match status" value="1"/>
</dbReference>
<dbReference type="NCBIfam" id="NF009488">
    <property type="entry name" value="PRK12850.1"/>
    <property type="match status" value="1"/>
</dbReference>
<dbReference type="NCBIfam" id="NF009489">
    <property type="entry name" value="PRK12851.1"/>
    <property type="match status" value="1"/>
</dbReference>
<dbReference type="PANTHER" id="PTHR45633">
    <property type="entry name" value="60 KDA HEAT SHOCK PROTEIN, MITOCHONDRIAL"/>
    <property type="match status" value="1"/>
</dbReference>
<dbReference type="Pfam" id="PF00118">
    <property type="entry name" value="Cpn60_TCP1"/>
    <property type="match status" value="1"/>
</dbReference>
<dbReference type="PRINTS" id="PR00298">
    <property type="entry name" value="CHAPERONIN60"/>
</dbReference>
<dbReference type="SUPFAM" id="SSF52029">
    <property type="entry name" value="GroEL apical domain-like"/>
    <property type="match status" value="1"/>
</dbReference>
<dbReference type="SUPFAM" id="SSF48592">
    <property type="entry name" value="GroEL equatorial domain-like"/>
    <property type="match status" value="1"/>
</dbReference>
<dbReference type="SUPFAM" id="SSF54849">
    <property type="entry name" value="GroEL-intermediate domain like"/>
    <property type="match status" value="1"/>
</dbReference>
<dbReference type="PROSITE" id="PS00296">
    <property type="entry name" value="CHAPERONINS_CPN60"/>
    <property type="match status" value="1"/>
</dbReference>
<organism>
    <name type="scientific">Psychrobacter sp. (strain PRwf-1)</name>
    <dbReference type="NCBI Taxonomy" id="349106"/>
    <lineage>
        <taxon>Bacteria</taxon>
        <taxon>Pseudomonadati</taxon>
        <taxon>Pseudomonadota</taxon>
        <taxon>Gammaproteobacteria</taxon>
        <taxon>Moraxellales</taxon>
        <taxon>Moraxellaceae</taxon>
        <taxon>Psychrobacter</taxon>
    </lineage>
</organism>
<proteinExistence type="inferred from homology"/>
<evidence type="ECO:0000255" key="1">
    <source>
        <dbReference type="HAMAP-Rule" id="MF_00600"/>
    </source>
</evidence>
<reference key="1">
    <citation type="submission" date="2007-05" db="EMBL/GenBank/DDBJ databases">
        <title>Complete sequence of chromosome of Psychrobacter sp. PRwf-1.</title>
        <authorList>
            <consortium name="US DOE Joint Genome Institute"/>
            <person name="Copeland A."/>
            <person name="Lucas S."/>
            <person name="Lapidus A."/>
            <person name="Barry K."/>
            <person name="Detter J.C."/>
            <person name="Glavina del Rio T."/>
            <person name="Hammon N."/>
            <person name="Israni S."/>
            <person name="Dalin E."/>
            <person name="Tice H."/>
            <person name="Pitluck S."/>
            <person name="Chain P."/>
            <person name="Malfatti S."/>
            <person name="Shin M."/>
            <person name="Vergez L."/>
            <person name="Schmutz J."/>
            <person name="Larimer F."/>
            <person name="Land M."/>
            <person name="Hauser L."/>
            <person name="Kyrpides N."/>
            <person name="Kim E."/>
            <person name="Tiedje J."/>
            <person name="Richardson P."/>
        </authorList>
    </citation>
    <scope>NUCLEOTIDE SEQUENCE [LARGE SCALE GENOMIC DNA]</scope>
    <source>
        <strain>PRwf-1</strain>
    </source>
</reference>
<comment type="function">
    <text evidence="1">Together with its co-chaperonin GroES, plays an essential role in assisting protein folding. The GroEL-GroES system forms a nano-cage that allows encapsulation of the non-native substrate proteins and provides a physical environment optimized to promote and accelerate protein folding.</text>
</comment>
<comment type="catalytic activity">
    <reaction evidence="1">
        <text>ATP + H2O + a folded polypeptide = ADP + phosphate + an unfolded polypeptide.</text>
        <dbReference type="EC" id="5.6.1.7"/>
    </reaction>
</comment>
<comment type="subunit">
    <text evidence="1">Forms a cylinder of 14 subunits composed of two heptameric rings stacked back-to-back. Interacts with the co-chaperonin GroES.</text>
</comment>
<comment type="subcellular location">
    <subcellularLocation>
        <location evidence="1">Cytoplasm</location>
    </subcellularLocation>
</comment>
<comment type="similarity">
    <text evidence="1">Belongs to the chaperonin (HSP60) family.</text>
</comment>
<gene>
    <name evidence="1" type="primary">groEL</name>
    <name evidence="1" type="synonym">groL</name>
    <name type="ordered locus">PsycPRwf_0638</name>
</gene>
<name>CH60_PSYWF</name>
<protein>
    <recommendedName>
        <fullName evidence="1">Chaperonin GroEL</fullName>
        <ecNumber evidence="1">5.6.1.7</ecNumber>
    </recommendedName>
    <alternativeName>
        <fullName evidence="1">60 kDa chaperonin</fullName>
    </alternativeName>
    <alternativeName>
        <fullName evidence="1">Chaperonin-60</fullName>
        <shortName evidence="1">Cpn60</shortName>
    </alternativeName>
</protein>